<organism>
    <name type="scientific">Francisella philomiragia subsp. philomiragia (strain ATCC 25017 / CCUG 19701 / FSC 153 / O#319-036)</name>
    <dbReference type="NCBI Taxonomy" id="484022"/>
    <lineage>
        <taxon>Bacteria</taxon>
        <taxon>Pseudomonadati</taxon>
        <taxon>Pseudomonadota</taxon>
        <taxon>Gammaproteobacteria</taxon>
        <taxon>Thiotrichales</taxon>
        <taxon>Francisellaceae</taxon>
        <taxon>Francisella</taxon>
    </lineage>
</organism>
<keyword id="KW-0119">Carbohydrate metabolism</keyword>
<keyword id="KW-0456">Lyase</keyword>
<dbReference type="EC" id="4.2.1.126" evidence="1"/>
<dbReference type="EMBL" id="CP000937">
    <property type="protein sequence ID" value="ABZ87362.1"/>
    <property type="molecule type" value="Genomic_DNA"/>
</dbReference>
<dbReference type="SMR" id="B0TXA4"/>
<dbReference type="KEGG" id="fph:Fphi_1138"/>
<dbReference type="eggNOG" id="COG2103">
    <property type="taxonomic scope" value="Bacteria"/>
</dbReference>
<dbReference type="HOGENOM" id="CLU_049049_1_1_6"/>
<dbReference type="UniPathway" id="UPA00342"/>
<dbReference type="UniPathway" id="UPA00343"/>
<dbReference type="UniPathway" id="UPA00544"/>
<dbReference type="GO" id="GO:0097367">
    <property type="term" value="F:carbohydrate derivative binding"/>
    <property type="evidence" value="ECO:0007669"/>
    <property type="project" value="InterPro"/>
</dbReference>
<dbReference type="GO" id="GO:0016835">
    <property type="term" value="F:carbon-oxygen lyase activity"/>
    <property type="evidence" value="ECO:0007669"/>
    <property type="project" value="UniProtKB-UniRule"/>
</dbReference>
<dbReference type="GO" id="GO:0016803">
    <property type="term" value="F:ether hydrolase activity"/>
    <property type="evidence" value="ECO:0007669"/>
    <property type="project" value="TreeGrafter"/>
</dbReference>
<dbReference type="GO" id="GO:0097175">
    <property type="term" value="P:1,6-anhydro-N-acetyl-beta-muramic acid catabolic process"/>
    <property type="evidence" value="ECO:0007669"/>
    <property type="project" value="UniProtKB-UniRule"/>
</dbReference>
<dbReference type="GO" id="GO:0046348">
    <property type="term" value="P:amino sugar catabolic process"/>
    <property type="evidence" value="ECO:0007669"/>
    <property type="project" value="InterPro"/>
</dbReference>
<dbReference type="GO" id="GO:0097173">
    <property type="term" value="P:N-acetylmuramic acid catabolic process"/>
    <property type="evidence" value="ECO:0007669"/>
    <property type="project" value="UniProtKB-UniPathway"/>
</dbReference>
<dbReference type="GO" id="GO:0009254">
    <property type="term" value="P:peptidoglycan turnover"/>
    <property type="evidence" value="ECO:0007669"/>
    <property type="project" value="UniProtKB-UniRule"/>
</dbReference>
<dbReference type="CDD" id="cd05007">
    <property type="entry name" value="SIS_Etherase"/>
    <property type="match status" value="1"/>
</dbReference>
<dbReference type="FunFam" id="1.10.8.1080:FF:000001">
    <property type="entry name" value="N-acetylmuramic acid 6-phosphate etherase"/>
    <property type="match status" value="1"/>
</dbReference>
<dbReference type="FunFam" id="3.40.50.10490:FF:000014">
    <property type="entry name" value="N-acetylmuramic acid 6-phosphate etherase"/>
    <property type="match status" value="1"/>
</dbReference>
<dbReference type="Gene3D" id="1.10.8.1080">
    <property type="match status" value="1"/>
</dbReference>
<dbReference type="Gene3D" id="3.40.50.10490">
    <property type="entry name" value="Glucose-6-phosphate isomerase like protein, domain 1"/>
    <property type="match status" value="1"/>
</dbReference>
<dbReference type="HAMAP" id="MF_00068">
    <property type="entry name" value="MurQ"/>
    <property type="match status" value="1"/>
</dbReference>
<dbReference type="InterPro" id="IPR005488">
    <property type="entry name" value="Etherase_MurQ"/>
</dbReference>
<dbReference type="InterPro" id="IPR005486">
    <property type="entry name" value="Glucokinase_regulatory_CS"/>
</dbReference>
<dbReference type="InterPro" id="IPR040190">
    <property type="entry name" value="MURQ/GCKR"/>
</dbReference>
<dbReference type="InterPro" id="IPR001347">
    <property type="entry name" value="SIS_dom"/>
</dbReference>
<dbReference type="InterPro" id="IPR046348">
    <property type="entry name" value="SIS_dom_sf"/>
</dbReference>
<dbReference type="NCBIfam" id="TIGR00274">
    <property type="entry name" value="N-acetylmuramic acid 6-phosphate etherase"/>
    <property type="match status" value="1"/>
</dbReference>
<dbReference type="NCBIfam" id="NF003915">
    <property type="entry name" value="PRK05441.1"/>
    <property type="match status" value="1"/>
</dbReference>
<dbReference type="NCBIfam" id="NF009222">
    <property type="entry name" value="PRK12570.1"/>
    <property type="match status" value="1"/>
</dbReference>
<dbReference type="PANTHER" id="PTHR10088">
    <property type="entry name" value="GLUCOKINASE REGULATORY PROTEIN"/>
    <property type="match status" value="1"/>
</dbReference>
<dbReference type="PANTHER" id="PTHR10088:SF4">
    <property type="entry name" value="GLUCOKINASE REGULATORY PROTEIN"/>
    <property type="match status" value="1"/>
</dbReference>
<dbReference type="Pfam" id="PF22645">
    <property type="entry name" value="GKRP_SIS_N"/>
    <property type="match status" value="1"/>
</dbReference>
<dbReference type="SUPFAM" id="SSF53697">
    <property type="entry name" value="SIS domain"/>
    <property type="match status" value="1"/>
</dbReference>
<dbReference type="PROSITE" id="PS01272">
    <property type="entry name" value="GCKR"/>
    <property type="match status" value="1"/>
</dbReference>
<dbReference type="PROSITE" id="PS51464">
    <property type="entry name" value="SIS"/>
    <property type="match status" value="1"/>
</dbReference>
<sequence length="294" mass="31862">MSMLKNINTEKRNPRSFNLDSMSVQESVNLMIDEEYGVIEALKEQSLNIAKIVEVTSQALKKGGRIVYVGAGTSGRLGILDAVECPPTFSVDYNTIIGLIAGGEKAFIQAQEGAEDNPDFGKEDLLKINLTAKDVVIGIAASGRTPYVIGALEYANSIEATTIAISCTKQAKISSYADYNIEAVPGPEVLTGSTRLKAGTTQKLILNIISTLSMVSVGKVYQNLMVDVKPTNEKLVERSKNIICEATGVDYVTAQDFYMKANKSVKVAIVMILNDCDYEQALAILKKNNNFIKS</sequence>
<protein>
    <recommendedName>
        <fullName evidence="1">N-acetylmuramic acid 6-phosphate etherase</fullName>
        <shortName evidence="1">MurNAc-6-P etherase</shortName>
        <ecNumber evidence="1">4.2.1.126</ecNumber>
    </recommendedName>
    <alternativeName>
        <fullName evidence="1">N-acetylmuramic acid 6-phosphate hydrolase</fullName>
    </alternativeName>
    <alternativeName>
        <fullName evidence="1">N-acetylmuramic acid 6-phosphate lyase</fullName>
    </alternativeName>
</protein>
<gene>
    <name evidence="1" type="primary">murQ</name>
    <name type="ordered locus">Fphi_1138</name>
</gene>
<accession>B0TXA4</accession>
<feature type="chain" id="PRO_1000075107" description="N-acetylmuramic acid 6-phosphate etherase">
    <location>
        <begin position="1"/>
        <end position="294"/>
    </location>
</feature>
<feature type="domain" description="SIS" evidence="1">
    <location>
        <begin position="56"/>
        <end position="219"/>
    </location>
</feature>
<feature type="active site" description="Proton donor" evidence="1">
    <location>
        <position position="84"/>
    </location>
</feature>
<feature type="active site" evidence="1">
    <location>
        <position position="115"/>
    </location>
</feature>
<evidence type="ECO:0000255" key="1">
    <source>
        <dbReference type="HAMAP-Rule" id="MF_00068"/>
    </source>
</evidence>
<reference key="1">
    <citation type="submission" date="2007-12" db="EMBL/GenBank/DDBJ databases">
        <title>Complete sequence of chromosome of Francisella philomiragia subsp. philomiragia ATCC 25017.</title>
        <authorList>
            <consortium name="US DOE Joint Genome Institute"/>
            <person name="Copeland A."/>
            <person name="Lucas S."/>
            <person name="Lapidus A."/>
            <person name="Barry K."/>
            <person name="Detter J.C."/>
            <person name="Glavina del Rio T."/>
            <person name="Hammon N."/>
            <person name="Israni S."/>
            <person name="Dalin E."/>
            <person name="Tice H."/>
            <person name="Pitluck S."/>
            <person name="Chain P."/>
            <person name="Malfatti S."/>
            <person name="Shin M."/>
            <person name="Vergez L."/>
            <person name="Schmutz J."/>
            <person name="Larimer F."/>
            <person name="Land M."/>
            <person name="Hauser L."/>
            <person name="Richardson P."/>
        </authorList>
    </citation>
    <scope>NUCLEOTIDE SEQUENCE [LARGE SCALE GENOMIC DNA]</scope>
    <source>
        <strain>ATCC 25017 / CCUG 19701 / FSC 153 / O#319-036</strain>
    </source>
</reference>
<proteinExistence type="inferred from homology"/>
<comment type="function">
    <text evidence="1">Specifically catalyzes the cleavage of the D-lactyl ether substituent of MurNAc 6-phosphate, producing GlcNAc 6-phosphate and D-lactate. Together with AnmK, is also required for the utilization of anhydro-N-acetylmuramic acid (anhMurNAc) either imported from the medium or derived from its own cell wall murein, and thus plays a role in cell wall recycling.</text>
</comment>
<comment type="catalytic activity">
    <reaction evidence="1">
        <text>N-acetyl-D-muramate 6-phosphate + H2O = N-acetyl-D-glucosamine 6-phosphate + (R)-lactate</text>
        <dbReference type="Rhea" id="RHEA:26410"/>
        <dbReference type="ChEBI" id="CHEBI:15377"/>
        <dbReference type="ChEBI" id="CHEBI:16004"/>
        <dbReference type="ChEBI" id="CHEBI:57513"/>
        <dbReference type="ChEBI" id="CHEBI:58722"/>
        <dbReference type="EC" id="4.2.1.126"/>
    </reaction>
</comment>
<comment type="pathway">
    <text evidence="1">Amino-sugar metabolism; 1,6-anhydro-N-acetylmuramate degradation.</text>
</comment>
<comment type="pathway">
    <text evidence="1">Amino-sugar metabolism; N-acetylmuramate degradation.</text>
</comment>
<comment type="pathway">
    <text evidence="1">Cell wall biogenesis; peptidoglycan recycling.</text>
</comment>
<comment type="subunit">
    <text evidence="1">Homodimer.</text>
</comment>
<comment type="miscellaneous">
    <text evidence="1">A lyase-type mechanism (elimination/hydration) is suggested for the cleavage of the lactyl ether bond of MurNAc 6-phosphate, with the formation of an alpha,beta-unsaturated aldehyde intermediate with (E)-stereochemistry, followed by the syn addition of water to give product.</text>
</comment>
<comment type="similarity">
    <text evidence="1">Belongs to the GCKR-like family. MurNAc-6-P etherase subfamily.</text>
</comment>
<name>MURQ_FRAP2</name>